<protein>
    <recommendedName>
        <fullName evidence="1">Neuraminidase</fullName>
        <ecNumber evidence="1">3.2.1.18</ecNumber>
    </recommendedName>
</protein>
<proteinExistence type="inferred from homology"/>
<feature type="chain" id="PRO_0000280144" description="Neuraminidase">
    <location>
        <begin position="1"/>
        <end position="469"/>
    </location>
</feature>
<feature type="topological domain" description="Intravirion" evidence="1">
    <location>
        <begin position="1"/>
        <end position="9"/>
    </location>
</feature>
<feature type="transmembrane region" description="Helical" evidence="1">
    <location>
        <begin position="10"/>
        <end position="30"/>
    </location>
</feature>
<feature type="topological domain" description="Virion surface" evidence="1">
    <location>
        <begin position="31"/>
        <end position="469"/>
    </location>
</feature>
<feature type="region of interest" description="Involved in apical transport and lipid raft association" evidence="1">
    <location>
        <begin position="11"/>
        <end position="33"/>
    </location>
</feature>
<feature type="region of interest" description="Hypervariable stalk region" evidence="1">
    <location>
        <begin position="36"/>
        <end position="88"/>
    </location>
</feature>
<feature type="region of interest" description="Head of neuraminidase" evidence="1">
    <location>
        <begin position="91"/>
        <end position="469"/>
    </location>
</feature>
<feature type="active site" description="Proton donor/acceptor" evidence="1">
    <location>
        <position position="151"/>
    </location>
</feature>
<feature type="active site" description="Nucleophile" evidence="1">
    <location>
        <position position="406"/>
    </location>
</feature>
<feature type="binding site" evidence="1">
    <location>
        <position position="118"/>
    </location>
    <ligand>
        <name>substrate</name>
    </ligand>
</feature>
<feature type="binding site" evidence="1">
    <location>
        <position position="152"/>
    </location>
    <ligand>
        <name>substrate</name>
    </ligand>
</feature>
<feature type="binding site" evidence="1">
    <location>
        <begin position="276"/>
        <end position="277"/>
    </location>
    <ligand>
        <name>substrate</name>
    </ligand>
</feature>
<feature type="binding site" evidence="1">
    <location>
        <position position="292"/>
    </location>
    <ligand>
        <name>substrate</name>
    </ligand>
</feature>
<feature type="binding site" evidence="1">
    <location>
        <position position="293"/>
    </location>
    <ligand>
        <name>Ca(2+)</name>
        <dbReference type="ChEBI" id="CHEBI:29108"/>
    </ligand>
</feature>
<feature type="binding site" evidence="1">
    <location>
        <position position="297"/>
    </location>
    <ligand>
        <name>Ca(2+)</name>
        <dbReference type="ChEBI" id="CHEBI:29108"/>
    </ligand>
</feature>
<feature type="binding site" evidence="1">
    <location>
        <position position="324"/>
    </location>
    <ligand>
        <name>Ca(2+)</name>
        <dbReference type="ChEBI" id="CHEBI:29108"/>
    </ligand>
</feature>
<feature type="binding site" evidence="1">
    <location>
        <position position="371"/>
    </location>
    <ligand>
        <name>substrate</name>
    </ligand>
</feature>
<feature type="glycosylation site" description="N-linked (GlcNAc...) asparagine; by host" evidence="1">
    <location>
        <position position="61"/>
    </location>
</feature>
<feature type="glycosylation site" description="N-linked (GlcNAc...) asparagine; by host" evidence="1">
    <location>
        <position position="70"/>
    </location>
</feature>
<feature type="glycosylation site" description="N-linked (GlcNAc...) asparagine; by host" evidence="1">
    <location>
        <position position="86"/>
    </location>
</feature>
<feature type="glycosylation site" description="N-linked (GlcNAc...) asparagine; by host" evidence="1">
    <location>
        <position position="146"/>
    </location>
</feature>
<feature type="glycosylation site" description="N-linked (GlcNAc...) asparagine; by host" evidence="1">
    <location>
        <position position="200"/>
    </location>
</feature>
<feature type="glycosylation site" description="N-linked (GlcNAc...) asparagine; by host" evidence="1">
    <location>
        <position position="234"/>
    </location>
</feature>
<feature type="glycosylation site" description="N-linked (GlcNAc...) asparagine; by host" evidence="1">
    <location>
        <position position="402"/>
    </location>
</feature>
<feature type="disulfide bond" evidence="1">
    <location>
        <begin position="92"/>
        <end position="417"/>
    </location>
</feature>
<feature type="disulfide bond" evidence="1">
    <location>
        <begin position="124"/>
        <end position="129"/>
    </location>
</feature>
<feature type="disulfide bond" evidence="1">
    <location>
        <begin position="183"/>
        <end position="230"/>
    </location>
</feature>
<feature type="disulfide bond" evidence="1">
    <location>
        <begin position="232"/>
        <end position="237"/>
    </location>
</feature>
<feature type="disulfide bond" evidence="1">
    <location>
        <begin position="278"/>
        <end position="291"/>
    </location>
</feature>
<feature type="disulfide bond" evidence="1">
    <location>
        <begin position="280"/>
        <end position="289"/>
    </location>
</feature>
<feature type="disulfide bond" evidence="1">
    <location>
        <begin position="318"/>
        <end position="337"/>
    </location>
</feature>
<feature type="disulfide bond" evidence="1">
    <location>
        <begin position="421"/>
        <end position="447"/>
    </location>
</feature>
<comment type="function">
    <text evidence="1">Catalyzes the removal of terminal sialic acid residues from viral and cellular glycoconjugates. Cleaves off the terminal sialic acids on the glycosylated HA during virus budding to facilitate virus release. Additionally helps virus spread through the circulation by further removing sialic acids from the cell surface. These cleavages prevent self-aggregation and ensure the efficient spread of the progeny virus from cell to cell. Otherwise, infection would be limited to one round of replication. Described as a receptor-destroying enzyme because it cleaves a terminal sialic acid from the cellular receptors. May facilitate viral invasion of the upper airways by cleaving the sialic acid moieties on the mucin of the airway epithelial cells. Likely to plays a role in the budding process through its association with lipid rafts during intracellular transport. May additionally display a raft-association independent effect on budding. Plays a role in the determination of host range restriction on replication and virulence. Sialidase activity in late endosome/lysosome traffic seems to enhance virus replication.</text>
</comment>
<comment type="catalytic activity">
    <reaction evidence="1">
        <text>Hydrolysis of alpha-(2-&gt;3)-, alpha-(2-&gt;6)-, alpha-(2-&gt;8)- glycosidic linkages of terminal sialic acid residues in oligosaccharides, glycoproteins, glycolipids, colominic acid and synthetic substrates.</text>
        <dbReference type="EC" id="3.2.1.18"/>
    </reaction>
</comment>
<comment type="cofactor">
    <cofactor evidence="1">
        <name>Ca(2+)</name>
        <dbReference type="ChEBI" id="CHEBI:29108"/>
    </cofactor>
</comment>
<comment type="activity regulation">
    <text evidence="1">Inhibited by the neuraminidase inhibitors zanamivir (Relenza) and oseltamivir (Tamiflu). These drugs interfere with the release of progeny virus from infected cells and are effective against all influenza strains. Resistance to neuraminidase inhibitors is quite rare.</text>
</comment>
<comment type="subunit">
    <text evidence="1">Homotetramer.</text>
</comment>
<comment type="subcellular location">
    <subcellularLocation>
        <location evidence="1">Virion membrane</location>
    </subcellularLocation>
    <subcellularLocation>
        <location evidence="1">Host apical cell membrane</location>
        <topology evidence="1">Single-pass type II membrane protein</topology>
    </subcellularLocation>
    <text evidence="1">Preferentially accumulates at the apical plasma membrane in infected polarized epithelial cells, which is the virus assembly site. Uses lipid rafts for cell surface transport and apical sorting. In the virion, forms a mushroom-shaped spike on the surface of the membrane.</text>
</comment>
<comment type="domain">
    <text evidence="1">Intact N-terminus is essential for virion morphogenesis. Possesses two apical sorting signals, one in the ectodomain, which is likely to be a glycan, and the other in the transmembrane domain. The transmembrane domain also plays a role in lipid raft association.</text>
</comment>
<comment type="PTM">
    <text evidence="1">N-glycosylated.</text>
</comment>
<comment type="miscellaneous">
    <text>The influenza A genome consist of 8 RNA segments. Genetic variation of hemagglutinin and/or neuraminidase genes results in the emergence of new influenza strains. The mechanism of variation can be the result of point mutations or the result of genetic reassortment between segments of two different strains.</text>
</comment>
<comment type="similarity">
    <text evidence="1">Belongs to the glycosyl hydrolase 34 family.</text>
</comment>
<keyword id="KW-0106">Calcium</keyword>
<keyword id="KW-1015">Disulfide bond</keyword>
<keyword id="KW-0325">Glycoprotein</keyword>
<keyword id="KW-0326">Glycosidase</keyword>
<keyword id="KW-1032">Host cell membrane</keyword>
<keyword id="KW-1043">Host membrane</keyword>
<keyword id="KW-0378">Hydrolase</keyword>
<keyword id="KW-0472">Membrane</keyword>
<keyword id="KW-0479">Metal-binding</keyword>
<keyword id="KW-0735">Signal-anchor</keyword>
<keyword id="KW-0812">Transmembrane</keyword>
<keyword id="KW-1133">Transmembrane helix</keyword>
<keyword id="KW-0946">Virion</keyword>
<reference key="1">
    <citation type="submission" date="2006-02" db="EMBL/GenBank/DDBJ databases">
        <title>The NIAID influenza genome sequencing project.</title>
        <authorList>
            <person name="Ghedin E."/>
            <person name="Spiro D."/>
            <person name="Miller N."/>
            <person name="Zaborsky J."/>
            <person name="Feldblyum T."/>
            <person name="Subbu V."/>
            <person name="Shumway M."/>
            <person name="Sparenborg J."/>
            <person name="Groveman L."/>
            <person name="Halpin R."/>
            <person name="Sitz J."/>
            <person name="Koo H."/>
            <person name="Salzberg S.L."/>
            <person name="Webster R.G."/>
            <person name="Hoffmann E."/>
            <person name="Krauss S."/>
            <person name="Naeve C."/>
            <person name="Bao Y."/>
            <person name="Bolotov P."/>
            <person name="Dernovoy D."/>
            <person name="Kiryutin B."/>
            <person name="Lipman D.J."/>
            <person name="Tatusova T."/>
        </authorList>
    </citation>
    <scope>NUCLEOTIDE SEQUENCE [GENOMIC RNA]</scope>
</reference>
<reference key="2">
    <citation type="journal article" date="2004" name="Virus Res.">
        <title>Assembly and budding of influenza virus.</title>
        <authorList>
            <person name="Nayak D.P."/>
            <person name="Hui E.K."/>
            <person name="Barman S."/>
        </authorList>
    </citation>
    <scope>REVIEW</scope>
</reference>
<reference key="3">
    <citation type="journal article" date="2005" name="N. Engl. J. Med.">
        <title>Neuraminidase inhibitors for influenza.</title>
        <authorList>
            <person name="Moscona A."/>
        </authorList>
    </citation>
    <scope>REVIEW</scope>
</reference>
<reference key="4">
    <citation type="journal article" date="2005" name="Biol. Pharm. Bull.">
        <title>Sialobiology of influenza: molecular mechanism of host range variation of influenza viruses.</title>
        <authorList>
            <person name="Suzuki Y."/>
        </authorList>
    </citation>
    <scope>REVIEW</scope>
</reference>
<sequence length="469" mass="52146">MNPNQKIITIGSVSLTIATICFLMQIAILVTTVTLHFKQYECDSPANNQVMPCEPIIIERNITEIVYLTNTTIEKEICPKLVEYRNWSKPQCKITGFAPFSKDNSIRLSAGGDIWVTREPYVSCDPGKCYQFALGQGTTLDNKHSNDTIHDRTPHRTLLMNELGVPFHLGTRQVCIAWSSSSCHDGKAWLHVCVTGYDKNATASFIYDGRLVDSIGSWSQNILRTQESECVCINGTCTVVMTDGSASGRADTKILFIEEGKIVHISPLSGSAQHVEECSCYPRYPGVRCICRDNWKGSNRPVVDINVKDYSIDSSYVCSGLVGDTPRNNDRSSNSYCRNPNNEKGNHGVKGWAFDDGNDVWMGRTISEDSRSGYETFKVIGGWSTPNSKLQINRQVIVDSDNRSGYSGIFSVEGKSCINRCFYVELIRGREQETRVWWTSNSIVVFCGTSGTYGTGSWPDGADINLMPI</sequence>
<accession>Q2ICQ7</accession>
<organism>
    <name type="scientific">Influenza A virus (strain A/Memphis/101/1972 H3N2)</name>
    <dbReference type="NCBI Taxonomy" id="383583"/>
    <lineage>
        <taxon>Viruses</taxon>
        <taxon>Riboviria</taxon>
        <taxon>Orthornavirae</taxon>
        <taxon>Negarnaviricota</taxon>
        <taxon>Polyploviricotina</taxon>
        <taxon>Insthoviricetes</taxon>
        <taxon>Articulavirales</taxon>
        <taxon>Orthomyxoviridae</taxon>
        <taxon>Alphainfluenzavirus</taxon>
        <taxon>Alphainfluenzavirus influenzae</taxon>
        <taxon>Influenza A virus</taxon>
    </lineage>
</organism>
<dbReference type="EC" id="3.2.1.18" evidence="1"/>
<dbReference type="EMBL" id="CY008678">
    <property type="protein sequence ID" value="ABD17326.1"/>
    <property type="molecule type" value="Genomic_RNA"/>
</dbReference>
<dbReference type="SMR" id="Q2ICQ7"/>
<dbReference type="CAZy" id="GH34">
    <property type="family name" value="Glycoside Hydrolase Family 34"/>
</dbReference>
<dbReference type="GlyCosmos" id="Q2ICQ7">
    <property type="glycosylation" value="7 sites, No reported glycans"/>
</dbReference>
<dbReference type="PRO" id="PR:Q2ICQ7"/>
<dbReference type="Proteomes" id="UP000009189">
    <property type="component" value="Genome"/>
</dbReference>
<dbReference type="GO" id="GO:0020002">
    <property type="term" value="C:host cell plasma membrane"/>
    <property type="evidence" value="ECO:0007669"/>
    <property type="project" value="UniProtKB-SubCell"/>
</dbReference>
<dbReference type="GO" id="GO:0016020">
    <property type="term" value="C:membrane"/>
    <property type="evidence" value="ECO:0007669"/>
    <property type="project" value="UniProtKB-UniRule"/>
</dbReference>
<dbReference type="GO" id="GO:0055036">
    <property type="term" value="C:virion membrane"/>
    <property type="evidence" value="ECO:0007669"/>
    <property type="project" value="UniProtKB-SubCell"/>
</dbReference>
<dbReference type="GO" id="GO:0004308">
    <property type="term" value="F:exo-alpha-sialidase activity"/>
    <property type="evidence" value="ECO:0007669"/>
    <property type="project" value="UniProtKB-UniRule"/>
</dbReference>
<dbReference type="GO" id="GO:0046872">
    <property type="term" value="F:metal ion binding"/>
    <property type="evidence" value="ECO:0007669"/>
    <property type="project" value="UniProtKB-UniRule"/>
</dbReference>
<dbReference type="GO" id="GO:0005975">
    <property type="term" value="P:carbohydrate metabolic process"/>
    <property type="evidence" value="ECO:0007669"/>
    <property type="project" value="InterPro"/>
</dbReference>
<dbReference type="GO" id="GO:0046761">
    <property type="term" value="P:viral budding from plasma membrane"/>
    <property type="evidence" value="ECO:0007669"/>
    <property type="project" value="UniProtKB-UniRule"/>
</dbReference>
<dbReference type="CDD" id="cd15483">
    <property type="entry name" value="Influenza_NA"/>
    <property type="match status" value="1"/>
</dbReference>
<dbReference type="Gene3D" id="2.120.10.10">
    <property type="match status" value="1"/>
</dbReference>
<dbReference type="HAMAP" id="MF_04071">
    <property type="entry name" value="INFV_NRAM"/>
    <property type="match status" value="1"/>
</dbReference>
<dbReference type="InterPro" id="IPR001860">
    <property type="entry name" value="Glyco_hydro_34"/>
</dbReference>
<dbReference type="InterPro" id="IPR033654">
    <property type="entry name" value="Sialidase_Influenza_A/B"/>
</dbReference>
<dbReference type="InterPro" id="IPR036278">
    <property type="entry name" value="Sialidase_sf"/>
</dbReference>
<dbReference type="Pfam" id="PF00064">
    <property type="entry name" value="Neur"/>
    <property type="match status" value="1"/>
</dbReference>
<dbReference type="SUPFAM" id="SSF50939">
    <property type="entry name" value="Sialidases"/>
    <property type="match status" value="1"/>
</dbReference>
<name>NRAM_I72A4</name>
<gene>
    <name evidence="1" type="primary">NA</name>
</gene>
<organismHost>
    <name type="scientific">Aves</name>
    <dbReference type="NCBI Taxonomy" id="8782"/>
</organismHost>
<organismHost>
    <name type="scientific">Cetacea</name>
    <name type="common">whales</name>
    <dbReference type="NCBI Taxonomy" id="9721"/>
</organismHost>
<organismHost>
    <name type="scientific">Homo sapiens</name>
    <name type="common">Human</name>
    <dbReference type="NCBI Taxonomy" id="9606"/>
</organismHost>
<organismHost>
    <name type="scientific">Phocidae</name>
    <name type="common">true seals</name>
    <dbReference type="NCBI Taxonomy" id="9709"/>
</organismHost>
<organismHost>
    <name type="scientific">Sus scrofa</name>
    <name type="common">Pig</name>
    <dbReference type="NCBI Taxonomy" id="9823"/>
</organismHost>
<evidence type="ECO:0000255" key="1">
    <source>
        <dbReference type="HAMAP-Rule" id="MF_04071"/>
    </source>
</evidence>